<dbReference type="EMBL" id="BA000050">
    <property type="protein sequence ID" value="BAE57808.1"/>
    <property type="molecule type" value="Genomic_DNA"/>
</dbReference>
<dbReference type="RefSeq" id="XP_001819810.1">
    <property type="nucleotide sequence ID" value="XM_001819758.2"/>
</dbReference>
<dbReference type="SMR" id="Q2UKV7"/>
<dbReference type="STRING" id="510516.Q2UKV7"/>
<dbReference type="EnsemblFungi" id="BAE57808">
    <property type="protein sequence ID" value="BAE57808"/>
    <property type="gene ID" value="AO090003000656"/>
</dbReference>
<dbReference type="GeneID" id="5991793"/>
<dbReference type="KEGG" id="aor:AO090003000656"/>
<dbReference type="VEuPathDB" id="FungiDB:AO090003000656"/>
<dbReference type="HOGENOM" id="CLU_060354_0_2_1"/>
<dbReference type="OMA" id="CSYDERE"/>
<dbReference type="OrthoDB" id="122520at5052"/>
<dbReference type="Proteomes" id="UP000006564">
    <property type="component" value="Chromosome 2"/>
</dbReference>
<dbReference type="GO" id="GO:0000781">
    <property type="term" value="C:chromosome, telomeric region"/>
    <property type="evidence" value="ECO:0007669"/>
    <property type="project" value="GOC"/>
</dbReference>
<dbReference type="GO" id="GO:0005829">
    <property type="term" value="C:cytosol"/>
    <property type="evidence" value="ECO:0007669"/>
    <property type="project" value="EnsemblFungi"/>
</dbReference>
<dbReference type="GO" id="GO:0070775">
    <property type="term" value="C:H3 histone acetyltransferase complex"/>
    <property type="evidence" value="ECO:0007669"/>
    <property type="project" value="EnsemblFungi"/>
</dbReference>
<dbReference type="GO" id="GO:0005634">
    <property type="term" value="C:nucleus"/>
    <property type="evidence" value="ECO:0007669"/>
    <property type="project" value="UniProtKB-SubCell"/>
</dbReference>
<dbReference type="GO" id="GO:0010698">
    <property type="term" value="F:acetyltransferase activator activity"/>
    <property type="evidence" value="ECO:0007669"/>
    <property type="project" value="EnsemblFungi"/>
</dbReference>
<dbReference type="GO" id="GO:0042393">
    <property type="term" value="F:histone binding"/>
    <property type="evidence" value="ECO:0007669"/>
    <property type="project" value="EnsemblFungi"/>
</dbReference>
<dbReference type="GO" id="GO:0033554">
    <property type="term" value="P:cellular response to stress"/>
    <property type="evidence" value="ECO:0007669"/>
    <property type="project" value="EnsemblFungi"/>
</dbReference>
<dbReference type="GO" id="GO:0006335">
    <property type="term" value="P:DNA replication-dependent chromatin assembly"/>
    <property type="evidence" value="ECO:0007669"/>
    <property type="project" value="EnsemblFungi"/>
</dbReference>
<dbReference type="GO" id="GO:0006334">
    <property type="term" value="P:nucleosome assembly"/>
    <property type="evidence" value="ECO:0007669"/>
    <property type="project" value="InterPro"/>
</dbReference>
<dbReference type="GO" id="GO:0006337">
    <property type="term" value="P:nucleosome disassembly"/>
    <property type="evidence" value="ECO:0007669"/>
    <property type="project" value="EnsemblFungi"/>
</dbReference>
<dbReference type="GO" id="GO:0032968">
    <property type="term" value="P:positive regulation of transcription elongation by RNA polymerase II"/>
    <property type="evidence" value="ECO:0007669"/>
    <property type="project" value="EnsemblFungi"/>
</dbReference>
<dbReference type="GO" id="GO:0036211">
    <property type="term" value="P:protein modification process"/>
    <property type="evidence" value="ECO:0007669"/>
    <property type="project" value="EnsemblFungi"/>
</dbReference>
<dbReference type="GO" id="GO:0030466">
    <property type="term" value="P:silent mating-type cassette heterochromatin formation"/>
    <property type="evidence" value="ECO:0007669"/>
    <property type="project" value="EnsemblFungi"/>
</dbReference>
<dbReference type="GO" id="GO:0031509">
    <property type="term" value="P:subtelomeric heterochromatin formation"/>
    <property type="evidence" value="ECO:0007669"/>
    <property type="project" value="EnsemblFungi"/>
</dbReference>
<dbReference type="FunFam" id="2.60.40.1490:FF:000001">
    <property type="entry name" value="Histone chaperone ASF1"/>
    <property type="match status" value="1"/>
</dbReference>
<dbReference type="Gene3D" id="2.60.40.1490">
    <property type="entry name" value="Histone chaperone ASF1-like"/>
    <property type="match status" value="1"/>
</dbReference>
<dbReference type="InterPro" id="IPR006818">
    <property type="entry name" value="ASF1-like"/>
</dbReference>
<dbReference type="InterPro" id="IPR036747">
    <property type="entry name" value="ASF1-like_sf"/>
</dbReference>
<dbReference type="InterPro" id="IPR017282">
    <property type="entry name" value="Hist_deposition_Asf1"/>
</dbReference>
<dbReference type="PANTHER" id="PTHR12040">
    <property type="entry name" value="ANTI-SILENCING PROTEIN 1"/>
    <property type="match status" value="1"/>
</dbReference>
<dbReference type="PANTHER" id="PTHR12040:SF0">
    <property type="entry name" value="HISTONE CHAPERONE ASF1"/>
    <property type="match status" value="1"/>
</dbReference>
<dbReference type="Pfam" id="PF04729">
    <property type="entry name" value="ASF1_hist_chap"/>
    <property type="match status" value="1"/>
</dbReference>
<dbReference type="PIRSF" id="PIRSF037759">
    <property type="entry name" value="Histone_Asf1"/>
    <property type="match status" value="1"/>
</dbReference>
<dbReference type="SUPFAM" id="SSF101546">
    <property type="entry name" value="ASF1-like"/>
    <property type="match status" value="1"/>
</dbReference>
<organism>
    <name type="scientific">Aspergillus oryzae (strain ATCC 42149 / RIB 40)</name>
    <name type="common">Yellow koji mold</name>
    <dbReference type="NCBI Taxonomy" id="510516"/>
    <lineage>
        <taxon>Eukaryota</taxon>
        <taxon>Fungi</taxon>
        <taxon>Dikarya</taxon>
        <taxon>Ascomycota</taxon>
        <taxon>Pezizomycotina</taxon>
        <taxon>Eurotiomycetes</taxon>
        <taxon>Eurotiomycetidae</taxon>
        <taxon>Eurotiales</taxon>
        <taxon>Aspergillaceae</taxon>
        <taxon>Aspergillus</taxon>
        <taxon>Aspergillus subgen. Circumdati</taxon>
    </lineage>
</organism>
<protein>
    <recommendedName>
        <fullName>Histone chaperone asf1</fullName>
    </recommendedName>
    <alternativeName>
        <fullName>Anti-silencing function protein 1</fullName>
    </alternativeName>
</protein>
<accession>Q2UKV7</accession>
<proteinExistence type="inferred from homology"/>
<feature type="chain" id="PRO_0000284028" description="Histone chaperone asf1">
    <location>
        <begin position="1"/>
        <end position="285"/>
    </location>
</feature>
<feature type="region of interest" description="Disordered" evidence="3">
    <location>
        <begin position="196"/>
        <end position="285"/>
    </location>
</feature>
<feature type="coiled-coil region" evidence="2">
    <location>
        <begin position="183"/>
        <end position="248"/>
    </location>
</feature>
<feature type="compositionally biased region" description="Basic and acidic residues" evidence="3">
    <location>
        <begin position="196"/>
        <end position="210"/>
    </location>
</feature>
<feature type="compositionally biased region" description="Acidic residues" evidence="3">
    <location>
        <begin position="218"/>
        <end position="263"/>
    </location>
</feature>
<evidence type="ECO:0000250" key="1"/>
<evidence type="ECO:0000255" key="2"/>
<evidence type="ECO:0000256" key="3">
    <source>
        <dbReference type="SAM" id="MobiDB-lite"/>
    </source>
</evidence>
<evidence type="ECO:0000305" key="4"/>
<comment type="function">
    <text evidence="1">Histone chaperone that facilitates histone deposition and histone exchange and removal during nucleosome assembly and disassembly.</text>
</comment>
<comment type="subunit">
    <text evidence="1">Interacts with histone H3 and histone H4.</text>
</comment>
<comment type="subcellular location">
    <subcellularLocation>
        <location evidence="1">Nucleus</location>
    </subcellularLocation>
</comment>
<comment type="similarity">
    <text evidence="4">Belongs to the ASF1 family.</text>
</comment>
<name>ASF1_ASPOR</name>
<gene>
    <name type="primary">asf1</name>
    <name type="ORF">AO090003000656</name>
</gene>
<reference key="1">
    <citation type="journal article" date="2005" name="Nature">
        <title>Genome sequencing and analysis of Aspergillus oryzae.</title>
        <authorList>
            <person name="Machida M."/>
            <person name="Asai K."/>
            <person name="Sano M."/>
            <person name="Tanaka T."/>
            <person name="Kumagai T."/>
            <person name="Terai G."/>
            <person name="Kusumoto K."/>
            <person name="Arima T."/>
            <person name="Akita O."/>
            <person name="Kashiwagi Y."/>
            <person name="Abe K."/>
            <person name="Gomi K."/>
            <person name="Horiuchi H."/>
            <person name="Kitamoto K."/>
            <person name="Kobayashi T."/>
            <person name="Takeuchi M."/>
            <person name="Denning D.W."/>
            <person name="Galagan J.E."/>
            <person name="Nierman W.C."/>
            <person name="Yu J."/>
            <person name="Archer D.B."/>
            <person name="Bennett J.W."/>
            <person name="Bhatnagar D."/>
            <person name="Cleveland T.E."/>
            <person name="Fedorova N.D."/>
            <person name="Gotoh O."/>
            <person name="Horikawa H."/>
            <person name="Hosoyama A."/>
            <person name="Ichinomiya M."/>
            <person name="Igarashi R."/>
            <person name="Iwashita K."/>
            <person name="Juvvadi P.R."/>
            <person name="Kato M."/>
            <person name="Kato Y."/>
            <person name="Kin T."/>
            <person name="Kokubun A."/>
            <person name="Maeda H."/>
            <person name="Maeyama N."/>
            <person name="Maruyama J."/>
            <person name="Nagasaki H."/>
            <person name="Nakajima T."/>
            <person name="Oda K."/>
            <person name="Okada K."/>
            <person name="Paulsen I."/>
            <person name="Sakamoto K."/>
            <person name="Sawano T."/>
            <person name="Takahashi M."/>
            <person name="Takase K."/>
            <person name="Terabayashi Y."/>
            <person name="Wortman J.R."/>
            <person name="Yamada O."/>
            <person name="Yamagata Y."/>
            <person name="Anazawa H."/>
            <person name="Hata Y."/>
            <person name="Koide Y."/>
            <person name="Komori T."/>
            <person name="Koyama Y."/>
            <person name="Minetoki T."/>
            <person name="Suharnan S."/>
            <person name="Tanaka A."/>
            <person name="Isono K."/>
            <person name="Kuhara S."/>
            <person name="Ogasawara N."/>
            <person name="Kikuchi H."/>
        </authorList>
    </citation>
    <scope>NUCLEOTIDE SEQUENCE [LARGE SCALE GENOMIC DNA]</scope>
    <source>
        <strain>ATCC 42149 / RIB 40</strain>
    </source>
</reference>
<keyword id="KW-0143">Chaperone</keyword>
<keyword id="KW-0156">Chromatin regulator</keyword>
<keyword id="KW-0175">Coiled coil</keyword>
<keyword id="KW-0539">Nucleus</keyword>
<keyword id="KW-1185">Reference proteome</keyword>
<keyword id="KW-0804">Transcription</keyword>
<keyword id="KW-0805">Transcription regulation</keyword>
<sequence length="285" mass="31924">MSVVSLLGVKIQNNPAPFLAPYQFEITFECLEQLQKDLEWKLTYVGSATSSEYDQELDSLFVGPIPVGVNKFIFEAEAPDLKRIPTSEILGVTVILLTCSYDGREFVRVGYYVNNEYDSEDLSAEPPAKPIIERIRRNILAEKPRVTRFAIKWDSEESAPAEYPPDQPEADILEDDSAAYGAEEAELEAALVRELADAERDVKSEDHEMEGAEPAIKEEEEEDISDAESEDIEDESDDDEEDLDEEEAGDGDEDVEMGDDSEQKDDGPKADSTNQHSHQPEVMVH</sequence>